<sequence length="337" mass="37426">MGHAHAPRRGSLGYSPRVRARSQKPKMRNWAELGDQPKIQGFVGFKAGMSHIVMVDDRPHSATEGMEISVPVTIVEAPQMHVAGIRVYDDSPYGKKVIGEAWISDLKMLESLTHLPKNGYKTDEQLAKIAELVKKGVVADLRVMTVTLTSEVSGIPKKVPELMENRIAGGDMAKRFEFAKSLMGKAVGIKDVFAPGELVDVSAITKGYGTQGPVVRWGIATQKRKHARTGKKRHVGNLGPWNPHRIRWQVPQLGQTGYHQRTEYNKRILKMGDKAEEITPAGGFLHYGLIRNDYIMLKGSIPGPVKRMVRIRPAVRPKNMPKQAPEITYLSTQSKMG</sequence>
<comment type="function">
    <text evidence="1">One of the primary rRNA binding proteins, it binds directly near the 3'-end of the 23S rRNA, where it nucleates assembly of the 50S subunit.</text>
</comment>
<comment type="subunit">
    <text evidence="1">Part of the 50S ribosomal subunit. Forms a cluster with proteins L14 and L24e.</text>
</comment>
<comment type="similarity">
    <text evidence="1">Belongs to the universal ribosomal protein uL3 family.</text>
</comment>
<protein>
    <recommendedName>
        <fullName evidence="1">Large ribosomal subunit protein uL3</fullName>
    </recommendedName>
    <alternativeName>
        <fullName evidence="3">50S ribosomal protein L3</fullName>
    </alternativeName>
</protein>
<dbReference type="EMBL" id="AM114193">
    <property type="protein sequence ID" value="CAJ37604.1"/>
    <property type="molecule type" value="Genomic_DNA"/>
</dbReference>
<dbReference type="RefSeq" id="WP_012034981.1">
    <property type="nucleotide sequence ID" value="NC_009464.1"/>
</dbReference>
<dbReference type="SMR" id="Q0W1Y9"/>
<dbReference type="STRING" id="351160.RCIX2540"/>
<dbReference type="GeneID" id="5144490"/>
<dbReference type="KEGG" id="rci:RCIX2540"/>
<dbReference type="PATRIC" id="fig|351160.9.peg.679"/>
<dbReference type="eggNOG" id="arCOG04070">
    <property type="taxonomic scope" value="Archaea"/>
</dbReference>
<dbReference type="OrthoDB" id="6121at2157"/>
<dbReference type="Proteomes" id="UP000000663">
    <property type="component" value="Chromosome"/>
</dbReference>
<dbReference type="GO" id="GO:0022625">
    <property type="term" value="C:cytosolic large ribosomal subunit"/>
    <property type="evidence" value="ECO:0007669"/>
    <property type="project" value="TreeGrafter"/>
</dbReference>
<dbReference type="GO" id="GO:0019843">
    <property type="term" value="F:rRNA binding"/>
    <property type="evidence" value="ECO:0007669"/>
    <property type="project" value="UniProtKB-UniRule"/>
</dbReference>
<dbReference type="GO" id="GO:0003735">
    <property type="term" value="F:structural constituent of ribosome"/>
    <property type="evidence" value="ECO:0007669"/>
    <property type="project" value="InterPro"/>
</dbReference>
<dbReference type="GO" id="GO:0006412">
    <property type="term" value="P:translation"/>
    <property type="evidence" value="ECO:0007669"/>
    <property type="project" value="UniProtKB-UniRule"/>
</dbReference>
<dbReference type="Gene3D" id="3.30.1430.10">
    <property type="match status" value="1"/>
</dbReference>
<dbReference type="Gene3D" id="4.10.960.10">
    <property type="entry name" value="Ribosomal protein L3, domain 3"/>
    <property type="match status" value="1"/>
</dbReference>
<dbReference type="Gene3D" id="2.40.30.10">
    <property type="entry name" value="Translation factors"/>
    <property type="match status" value="1"/>
</dbReference>
<dbReference type="HAMAP" id="MF_01325_A">
    <property type="entry name" value="Ribosomal_uL3_A"/>
    <property type="match status" value="1"/>
</dbReference>
<dbReference type="InterPro" id="IPR045077">
    <property type="entry name" value="L3_arc_euk"/>
</dbReference>
<dbReference type="InterPro" id="IPR044892">
    <property type="entry name" value="Ribosomal_L3_dom_3_arc_sf"/>
</dbReference>
<dbReference type="InterPro" id="IPR000597">
    <property type="entry name" value="Ribosomal_uL3"/>
</dbReference>
<dbReference type="InterPro" id="IPR019928">
    <property type="entry name" value="Ribosomal_uL3_arc"/>
</dbReference>
<dbReference type="InterPro" id="IPR009000">
    <property type="entry name" value="Transl_B-barrel_sf"/>
</dbReference>
<dbReference type="NCBIfam" id="TIGR03626">
    <property type="entry name" value="L3_arch"/>
    <property type="match status" value="1"/>
</dbReference>
<dbReference type="NCBIfam" id="NF003261">
    <property type="entry name" value="PRK04231.1"/>
    <property type="match status" value="1"/>
</dbReference>
<dbReference type="PANTHER" id="PTHR11363">
    <property type="entry name" value="60S RIBOSOMAL PROTEIN L3-RELATED"/>
    <property type="match status" value="1"/>
</dbReference>
<dbReference type="PANTHER" id="PTHR11363:SF5">
    <property type="entry name" value="LARGE RIBOSOMAL SUBUNIT PROTEIN UL3"/>
    <property type="match status" value="1"/>
</dbReference>
<dbReference type="Pfam" id="PF00297">
    <property type="entry name" value="Ribosomal_L3"/>
    <property type="match status" value="1"/>
</dbReference>
<dbReference type="SUPFAM" id="SSF50447">
    <property type="entry name" value="Translation proteins"/>
    <property type="match status" value="1"/>
</dbReference>
<proteinExistence type="inferred from homology"/>
<organism>
    <name type="scientific">Methanocella arvoryzae (strain DSM 22066 / NBRC 105507 / MRE50)</name>
    <dbReference type="NCBI Taxonomy" id="351160"/>
    <lineage>
        <taxon>Archaea</taxon>
        <taxon>Methanobacteriati</taxon>
        <taxon>Methanobacteriota</taxon>
        <taxon>Stenosarchaea group</taxon>
        <taxon>Methanomicrobia</taxon>
        <taxon>Methanocellales</taxon>
        <taxon>Methanocellaceae</taxon>
        <taxon>Methanocella</taxon>
    </lineage>
</organism>
<gene>
    <name evidence="1" type="primary">rpl3</name>
    <name type="ordered locus">UNCMA_06520</name>
    <name type="ORF">RCIX2540</name>
</gene>
<evidence type="ECO:0000255" key="1">
    <source>
        <dbReference type="HAMAP-Rule" id="MF_01325"/>
    </source>
</evidence>
<evidence type="ECO:0000256" key="2">
    <source>
        <dbReference type="SAM" id="MobiDB-lite"/>
    </source>
</evidence>
<evidence type="ECO:0000305" key="3"/>
<keyword id="KW-1185">Reference proteome</keyword>
<keyword id="KW-0687">Ribonucleoprotein</keyword>
<keyword id="KW-0689">Ribosomal protein</keyword>
<keyword id="KW-0694">RNA-binding</keyword>
<keyword id="KW-0699">rRNA-binding</keyword>
<accession>Q0W1Y9</accession>
<feature type="chain" id="PRO_1000052164" description="Large ribosomal subunit protein uL3">
    <location>
        <begin position="1"/>
        <end position="337"/>
    </location>
</feature>
<feature type="region of interest" description="Disordered" evidence="2">
    <location>
        <begin position="1"/>
        <end position="26"/>
    </location>
</feature>
<name>RL3_METAR</name>
<reference key="1">
    <citation type="journal article" date="2006" name="Science">
        <title>Genome of rice cluster I archaea -- the key methane producers in the rice rhizosphere.</title>
        <authorList>
            <person name="Erkel C."/>
            <person name="Kube M."/>
            <person name="Reinhardt R."/>
            <person name="Liesack W."/>
        </authorList>
    </citation>
    <scope>NUCLEOTIDE SEQUENCE [LARGE SCALE GENOMIC DNA]</scope>
    <source>
        <strain>DSM 22066 / NBRC 105507 / MRE50</strain>
    </source>
</reference>